<dbReference type="EMBL" id="AK002439">
    <property type="protein sequence ID" value="BAC24990.1"/>
    <property type="molecule type" value="mRNA"/>
</dbReference>
<dbReference type="EMBL" id="AK003374">
    <property type="protein sequence ID" value="BAB22747.1"/>
    <property type="molecule type" value="mRNA"/>
</dbReference>
<dbReference type="EMBL" id="AK149963">
    <property type="protein sequence ID" value="BAE29197.1"/>
    <property type="molecule type" value="mRNA"/>
</dbReference>
<dbReference type="EMBL" id="AK169405">
    <property type="protein sequence ID" value="BAE41151.1"/>
    <property type="molecule type" value="mRNA"/>
</dbReference>
<dbReference type="EMBL" id="AK171818">
    <property type="protein sequence ID" value="BAE42679.1"/>
    <property type="molecule type" value="mRNA"/>
</dbReference>
<dbReference type="EMBL" id="BC013483">
    <property type="protein sequence ID" value="AAH13483.2"/>
    <property type="molecule type" value="mRNA"/>
</dbReference>
<dbReference type="CCDS" id="CCDS40769.1">
    <molecule id="Q6PJN8-1"/>
</dbReference>
<dbReference type="RefSeq" id="NP_080654.3">
    <molecule id="Q6PJN8-1"/>
    <property type="nucleotide sequence ID" value="NM_026378.3"/>
</dbReference>
<dbReference type="RefSeq" id="XP_017169029.1">
    <molecule id="Q6PJN8-1"/>
    <property type="nucleotide sequence ID" value="XM_017313540.2"/>
</dbReference>
<dbReference type="SMR" id="Q6PJN8"/>
<dbReference type="FunCoup" id="Q6PJN8">
    <property type="interactions" value="95"/>
</dbReference>
<dbReference type="STRING" id="10090.ENSMUSP00000019183"/>
<dbReference type="GlyGen" id="Q6PJN8">
    <property type="glycosylation" value="3 sites"/>
</dbReference>
<dbReference type="iPTMnet" id="Q6PJN8"/>
<dbReference type="PhosphoSitePlus" id="Q6PJN8"/>
<dbReference type="PaxDb" id="10090-ENSMUSP00000019183"/>
<dbReference type="PeptideAtlas" id="Q6PJN8"/>
<dbReference type="ProteomicsDB" id="277943">
    <molecule id="Q6PJN8-1"/>
</dbReference>
<dbReference type="ProteomicsDB" id="277944">
    <molecule id="Q6PJN8-2"/>
</dbReference>
<dbReference type="Pumba" id="Q6PJN8"/>
<dbReference type="Antibodypedia" id="30345">
    <property type="antibodies" value="100 antibodies from 21 providers"/>
</dbReference>
<dbReference type="DNASU" id="67789"/>
<dbReference type="Ensembl" id="ENSMUST00000019183.14">
    <molecule id="Q6PJN8-1"/>
    <property type="protein sequence ID" value="ENSMUSP00000019183.9"/>
    <property type="gene ID" value="ENSMUSG00000019039.15"/>
</dbReference>
<dbReference type="GeneID" id="67789"/>
<dbReference type="KEGG" id="mmu:67789"/>
<dbReference type="UCSC" id="uc009rqi.1">
    <molecule id="Q6PJN8-1"/>
    <property type="organism name" value="mouse"/>
</dbReference>
<dbReference type="AGR" id="MGI:1915039"/>
<dbReference type="CTD" id="55152"/>
<dbReference type="MGI" id="MGI:1915039">
    <property type="gene designation" value="Dalrd3"/>
</dbReference>
<dbReference type="VEuPathDB" id="HostDB:ENSMUSG00000019039"/>
<dbReference type="eggNOG" id="KOG1195">
    <property type="taxonomic scope" value="Eukaryota"/>
</dbReference>
<dbReference type="GeneTree" id="ENSGT00390000014621"/>
<dbReference type="HOGENOM" id="CLU_041286_1_1_1"/>
<dbReference type="InParanoid" id="Q6PJN8"/>
<dbReference type="OMA" id="REDQEWG"/>
<dbReference type="OrthoDB" id="9990834at2759"/>
<dbReference type="PhylomeDB" id="Q6PJN8"/>
<dbReference type="TreeFam" id="TF325601"/>
<dbReference type="BioGRID-ORCS" id="67789">
    <property type="hits" value="1 hit in 77 CRISPR screens"/>
</dbReference>
<dbReference type="ChiTaRS" id="Dalrd3">
    <property type="organism name" value="mouse"/>
</dbReference>
<dbReference type="PRO" id="PR:Q6PJN8"/>
<dbReference type="Proteomes" id="UP000000589">
    <property type="component" value="Chromosome 9"/>
</dbReference>
<dbReference type="RNAct" id="Q6PJN8">
    <property type="molecule type" value="protein"/>
</dbReference>
<dbReference type="Bgee" id="ENSMUSG00000019039">
    <property type="expression patterns" value="Expressed in retinal neural layer and 261 other cell types or tissues"/>
</dbReference>
<dbReference type="ExpressionAtlas" id="Q6PJN8">
    <property type="expression patterns" value="baseline and differential"/>
</dbReference>
<dbReference type="GO" id="GO:0004814">
    <property type="term" value="F:arginine-tRNA ligase activity"/>
    <property type="evidence" value="ECO:0007669"/>
    <property type="project" value="InterPro"/>
</dbReference>
<dbReference type="GO" id="GO:0005524">
    <property type="term" value="F:ATP binding"/>
    <property type="evidence" value="ECO:0007669"/>
    <property type="project" value="InterPro"/>
</dbReference>
<dbReference type="GO" id="GO:0000049">
    <property type="term" value="F:tRNA binding"/>
    <property type="evidence" value="ECO:0000250"/>
    <property type="project" value="UniProtKB"/>
</dbReference>
<dbReference type="GO" id="GO:0006420">
    <property type="term" value="P:arginyl-tRNA aminoacylation"/>
    <property type="evidence" value="ECO:0007669"/>
    <property type="project" value="InterPro"/>
</dbReference>
<dbReference type="GO" id="GO:0106217">
    <property type="term" value="P:tRNA C3-cytosine methylation"/>
    <property type="evidence" value="ECO:0007669"/>
    <property type="project" value="Ensembl"/>
</dbReference>
<dbReference type="Gene3D" id="1.10.730.10">
    <property type="entry name" value="Isoleucyl-tRNA Synthetase, Domain 1"/>
    <property type="match status" value="1"/>
</dbReference>
<dbReference type="InterPro" id="IPR008909">
    <property type="entry name" value="DALR_anticod-bd"/>
</dbReference>
<dbReference type="InterPro" id="IPR037380">
    <property type="entry name" value="DALRD3"/>
</dbReference>
<dbReference type="InterPro" id="IPR009080">
    <property type="entry name" value="tRNAsynth_Ia_anticodon-bd"/>
</dbReference>
<dbReference type="PANTHER" id="PTHR16043:SF1">
    <property type="entry name" value="DALR ANTICODON-BINDING DOMAIN-CONTAINING PROTEIN 3"/>
    <property type="match status" value="1"/>
</dbReference>
<dbReference type="PANTHER" id="PTHR16043">
    <property type="entry name" value="DALRD3 PROTEIN"/>
    <property type="match status" value="1"/>
</dbReference>
<dbReference type="Pfam" id="PF05746">
    <property type="entry name" value="DALR_1"/>
    <property type="match status" value="1"/>
</dbReference>
<dbReference type="SMART" id="SM00836">
    <property type="entry name" value="DALR_1"/>
    <property type="match status" value="1"/>
</dbReference>
<dbReference type="SUPFAM" id="SSF47323">
    <property type="entry name" value="Anticodon-binding domain of a subclass of class I aminoacyl-tRNA synthetases"/>
    <property type="match status" value="1"/>
</dbReference>
<sequence length="538" mass="58733">MATGRLGVGETLEALNAAVGPGSPVWFKETHARHLRVRDFLAPRSALQARFRDGQVPECVFRAVSCLQGPGVAPVLRCAPTPAGLSLQLQRPAVFEHVLGALASYATPAKPASPGPRVVLHCPALRCNSGTLRLSQLRAVLVADHLVRVLRAHGVRVCSVPPVRDPHMSTFLQKLRVEWPTASKSTSTETLRTCVLANLNGSKEATLPPGVLGRLCLKELVEQRGTAGYDPSIDHCLVTEDVLSVLSELQEAVRHWPEGGHPGPAGRPDAGVDDCVVIHVVSCEEAFQQQKLDLLWQKLDDRAPHKQKHLVCGPVKMAGVPGTQLTAPQYYRLRHAQVCEASALKHGGDLAQDPAWTETFDILSVATIKFEMLSTAPQSQLLLAHSTISTKGTKSGTFVMYNCARLATLFEGYKHGTEQGLYPTFPLVSSLDFSLLHDEGEWLLLFNSVLPFLDLLSQTVSLAGTPGLHIPVRTEMVCKFLVQLSMDFSSYYNRVHILGEPRPHLFGQMFARLQLLRAVREVFHTGLAMLGLPPLSHI</sequence>
<accession>Q6PJN8</accession>
<accession>Q8C1T1</accession>
<accession>Q9D1L6</accession>
<comment type="function">
    <text evidence="1">Involved in tRNA methylation. Facilitates the recognition and targeting of tRNA(Arg)(CCU) and tRNA(Arg)(UCU) substrates for N(3)-methylcytidine modification by METTL2.</text>
</comment>
<comment type="subunit">
    <text evidence="1">Part of a complex containing tRNA(Arg) and METTL2. Interacts with tRNA(Arg)(CCU) and tRNA(Arg)(UCU). Interacts with METTL2.</text>
</comment>
<comment type="alternative products">
    <event type="alternative splicing"/>
    <isoform>
        <id>Q6PJN8-1</id>
        <name>1</name>
        <sequence type="displayed"/>
    </isoform>
    <isoform>
        <id>Q6PJN8-2</id>
        <name>2</name>
        <sequence type="described" ref="VSP_030747"/>
    </isoform>
</comment>
<organism>
    <name type="scientific">Mus musculus</name>
    <name type="common">Mouse</name>
    <dbReference type="NCBI Taxonomy" id="10090"/>
    <lineage>
        <taxon>Eukaryota</taxon>
        <taxon>Metazoa</taxon>
        <taxon>Chordata</taxon>
        <taxon>Craniata</taxon>
        <taxon>Vertebrata</taxon>
        <taxon>Euteleostomi</taxon>
        <taxon>Mammalia</taxon>
        <taxon>Eutheria</taxon>
        <taxon>Euarchontoglires</taxon>
        <taxon>Glires</taxon>
        <taxon>Rodentia</taxon>
        <taxon>Myomorpha</taxon>
        <taxon>Muroidea</taxon>
        <taxon>Muridae</taxon>
        <taxon>Murinae</taxon>
        <taxon>Mus</taxon>
        <taxon>Mus</taxon>
    </lineage>
</organism>
<name>DALD3_MOUSE</name>
<feature type="chain" id="PRO_0000315849" description="DALR anticodon-binding domain-containing protein 3">
    <location>
        <begin position="1"/>
        <end position="538"/>
    </location>
</feature>
<feature type="splice variant" id="VSP_030747" description="In isoform 2." evidence="2">
    <location>
        <begin position="1"/>
        <end position="371"/>
    </location>
</feature>
<feature type="sequence conflict" description="In Ref. 1; BAC24990." evidence="3" ref="1">
    <original>R</original>
    <variation>G</variation>
    <location>
        <position position="517"/>
    </location>
</feature>
<keyword id="KW-0025">Alternative splicing</keyword>
<keyword id="KW-1185">Reference proteome</keyword>
<reference key="1">
    <citation type="journal article" date="2005" name="Science">
        <title>The transcriptional landscape of the mammalian genome.</title>
        <authorList>
            <person name="Carninci P."/>
            <person name="Kasukawa T."/>
            <person name="Katayama S."/>
            <person name="Gough J."/>
            <person name="Frith M.C."/>
            <person name="Maeda N."/>
            <person name="Oyama R."/>
            <person name="Ravasi T."/>
            <person name="Lenhard B."/>
            <person name="Wells C."/>
            <person name="Kodzius R."/>
            <person name="Shimokawa K."/>
            <person name="Bajic V.B."/>
            <person name="Brenner S.E."/>
            <person name="Batalov S."/>
            <person name="Forrest A.R."/>
            <person name="Zavolan M."/>
            <person name="Davis M.J."/>
            <person name="Wilming L.G."/>
            <person name="Aidinis V."/>
            <person name="Allen J.E."/>
            <person name="Ambesi-Impiombato A."/>
            <person name="Apweiler R."/>
            <person name="Aturaliya R.N."/>
            <person name="Bailey T.L."/>
            <person name="Bansal M."/>
            <person name="Baxter L."/>
            <person name="Beisel K.W."/>
            <person name="Bersano T."/>
            <person name="Bono H."/>
            <person name="Chalk A.M."/>
            <person name="Chiu K.P."/>
            <person name="Choudhary V."/>
            <person name="Christoffels A."/>
            <person name="Clutterbuck D.R."/>
            <person name="Crowe M.L."/>
            <person name="Dalla E."/>
            <person name="Dalrymple B.P."/>
            <person name="de Bono B."/>
            <person name="Della Gatta G."/>
            <person name="di Bernardo D."/>
            <person name="Down T."/>
            <person name="Engstrom P."/>
            <person name="Fagiolini M."/>
            <person name="Faulkner G."/>
            <person name="Fletcher C.F."/>
            <person name="Fukushima T."/>
            <person name="Furuno M."/>
            <person name="Futaki S."/>
            <person name="Gariboldi M."/>
            <person name="Georgii-Hemming P."/>
            <person name="Gingeras T.R."/>
            <person name="Gojobori T."/>
            <person name="Green R.E."/>
            <person name="Gustincich S."/>
            <person name="Harbers M."/>
            <person name="Hayashi Y."/>
            <person name="Hensch T.K."/>
            <person name="Hirokawa N."/>
            <person name="Hill D."/>
            <person name="Huminiecki L."/>
            <person name="Iacono M."/>
            <person name="Ikeo K."/>
            <person name="Iwama A."/>
            <person name="Ishikawa T."/>
            <person name="Jakt M."/>
            <person name="Kanapin A."/>
            <person name="Katoh M."/>
            <person name="Kawasawa Y."/>
            <person name="Kelso J."/>
            <person name="Kitamura H."/>
            <person name="Kitano H."/>
            <person name="Kollias G."/>
            <person name="Krishnan S.P."/>
            <person name="Kruger A."/>
            <person name="Kummerfeld S.K."/>
            <person name="Kurochkin I.V."/>
            <person name="Lareau L.F."/>
            <person name="Lazarevic D."/>
            <person name="Lipovich L."/>
            <person name="Liu J."/>
            <person name="Liuni S."/>
            <person name="McWilliam S."/>
            <person name="Madan Babu M."/>
            <person name="Madera M."/>
            <person name="Marchionni L."/>
            <person name="Matsuda H."/>
            <person name="Matsuzawa S."/>
            <person name="Miki H."/>
            <person name="Mignone F."/>
            <person name="Miyake S."/>
            <person name="Morris K."/>
            <person name="Mottagui-Tabar S."/>
            <person name="Mulder N."/>
            <person name="Nakano N."/>
            <person name="Nakauchi H."/>
            <person name="Ng P."/>
            <person name="Nilsson R."/>
            <person name="Nishiguchi S."/>
            <person name="Nishikawa S."/>
            <person name="Nori F."/>
            <person name="Ohara O."/>
            <person name="Okazaki Y."/>
            <person name="Orlando V."/>
            <person name="Pang K.C."/>
            <person name="Pavan W.J."/>
            <person name="Pavesi G."/>
            <person name="Pesole G."/>
            <person name="Petrovsky N."/>
            <person name="Piazza S."/>
            <person name="Reed J."/>
            <person name="Reid J.F."/>
            <person name="Ring B.Z."/>
            <person name="Ringwald M."/>
            <person name="Rost B."/>
            <person name="Ruan Y."/>
            <person name="Salzberg S.L."/>
            <person name="Sandelin A."/>
            <person name="Schneider C."/>
            <person name="Schoenbach C."/>
            <person name="Sekiguchi K."/>
            <person name="Semple C.A."/>
            <person name="Seno S."/>
            <person name="Sessa L."/>
            <person name="Sheng Y."/>
            <person name="Shibata Y."/>
            <person name="Shimada H."/>
            <person name="Shimada K."/>
            <person name="Silva D."/>
            <person name="Sinclair B."/>
            <person name="Sperling S."/>
            <person name="Stupka E."/>
            <person name="Sugiura K."/>
            <person name="Sultana R."/>
            <person name="Takenaka Y."/>
            <person name="Taki K."/>
            <person name="Tammoja K."/>
            <person name="Tan S.L."/>
            <person name="Tang S."/>
            <person name="Taylor M.S."/>
            <person name="Tegner J."/>
            <person name="Teichmann S.A."/>
            <person name="Ueda H.R."/>
            <person name="van Nimwegen E."/>
            <person name="Verardo R."/>
            <person name="Wei C.L."/>
            <person name="Yagi K."/>
            <person name="Yamanishi H."/>
            <person name="Zabarovsky E."/>
            <person name="Zhu S."/>
            <person name="Zimmer A."/>
            <person name="Hide W."/>
            <person name="Bult C."/>
            <person name="Grimmond S.M."/>
            <person name="Teasdale R.D."/>
            <person name="Liu E.T."/>
            <person name="Brusic V."/>
            <person name="Quackenbush J."/>
            <person name="Wahlestedt C."/>
            <person name="Mattick J.S."/>
            <person name="Hume D.A."/>
            <person name="Kai C."/>
            <person name="Sasaki D."/>
            <person name="Tomaru Y."/>
            <person name="Fukuda S."/>
            <person name="Kanamori-Katayama M."/>
            <person name="Suzuki M."/>
            <person name="Aoki J."/>
            <person name="Arakawa T."/>
            <person name="Iida J."/>
            <person name="Imamura K."/>
            <person name="Itoh M."/>
            <person name="Kato T."/>
            <person name="Kawaji H."/>
            <person name="Kawagashira N."/>
            <person name="Kawashima T."/>
            <person name="Kojima M."/>
            <person name="Kondo S."/>
            <person name="Konno H."/>
            <person name="Nakano K."/>
            <person name="Ninomiya N."/>
            <person name="Nishio T."/>
            <person name="Okada M."/>
            <person name="Plessy C."/>
            <person name="Shibata K."/>
            <person name="Shiraki T."/>
            <person name="Suzuki S."/>
            <person name="Tagami M."/>
            <person name="Waki K."/>
            <person name="Watahiki A."/>
            <person name="Okamura-Oho Y."/>
            <person name="Suzuki H."/>
            <person name="Kawai J."/>
            <person name="Hayashizaki Y."/>
        </authorList>
    </citation>
    <scope>NUCLEOTIDE SEQUENCE [LARGE SCALE MRNA] (ISOFORMS 1 AND 2)</scope>
    <source>
        <strain>C57BL/6J</strain>
        <strain>NOD</strain>
        <tissue>Bone marrow</tissue>
        <tissue>Heart</tissue>
        <tissue>Kidney</tissue>
    </source>
</reference>
<reference key="2">
    <citation type="journal article" date="2004" name="Genome Res.">
        <title>The status, quality, and expansion of the NIH full-length cDNA project: the Mammalian Gene Collection (MGC).</title>
        <authorList>
            <consortium name="The MGC Project Team"/>
        </authorList>
    </citation>
    <scope>NUCLEOTIDE SEQUENCE [LARGE SCALE MRNA] (ISOFORM 1)</scope>
    <source>
        <strain>FVB/N</strain>
        <tissue>Kidney</tissue>
    </source>
</reference>
<protein>
    <recommendedName>
        <fullName>DALR anticodon-binding domain-containing protein 3</fullName>
    </recommendedName>
</protein>
<proteinExistence type="evidence at transcript level"/>
<evidence type="ECO:0000250" key="1">
    <source>
        <dbReference type="UniProtKB" id="Q5D0E6"/>
    </source>
</evidence>
<evidence type="ECO:0000303" key="2">
    <source>
    </source>
</evidence>
<evidence type="ECO:0000305" key="3"/>
<gene>
    <name type="primary">Dalrd3</name>
</gene>